<name>Y59_SIRV1</name>
<protein>
    <recommendedName>
        <fullName>Uncharacterized protein 59</fullName>
    </recommendedName>
</protein>
<reference key="1">
    <citation type="journal article" date="2001" name="Virology">
        <title>Sequences and replication of genomes of the archaeal rudiviruses SIRV1 and SIRV2: relationships to the archaeal lipothrixvirus SIFV and some eukaryal viruses.</title>
        <authorList>
            <person name="Peng X."/>
            <person name="Blum H."/>
            <person name="She Q."/>
            <person name="Mallok S."/>
            <person name="Bruegger K."/>
            <person name="Garrett R.A."/>
            <person name="Zillig W."/>
            <person name="Prangishvili D."/>
        </authorList>
    </citation>
    <scope>NUCLEOTIDE SEQUENCE [LARGE SCALE GENOMIC DNA]</scope>
    <source>
        <strain>Isolate variant VIII</strain>
    </source>
</reference>
<gene>
    <name type="ORF">59</name>
</gene>
<organism>
    <name type="scientific">Sulfolobus islandicus rod-shaped virus 1</name>
    <name type="common">SIRV-1</name>
    <name type="synonym">Sulfolobus virus SIRV-1</name>
    <dbReference type="NCBI Taxonomy" id="157898"/>
    <lineage>
        <taxon>Viruses</taxon>
        <taxon>Adnaviria</taxon>
        <taxon>Zilligvirae</taxon>
        <taxon>Taleaviricota</taxon>
        <taxon>Tokiviricetes</taxon>
        <taxon>Ligamenvirales</taxon>
        <taxon>Rudiviridae</taxon>
        <taxon>Icerudivirus</taxon>
        <taxon>Icerudivirus SIRV1</taxon>
    </lineage>
</organism>
<accession>Q8QL40</accession>
<keyword id="KW-1185">Reference proteome</keyword>
<proteinExistence type="predicted"/>
<dbReference type="EMBL" id="AJ414696">
    <property type="protein sequence ID" value="CAC93969.1"/>
    <property type="molecule type" value="Genomic_DNA"/>
</dbReference>
<dbReference type="RefSeq" id="NP_666602.1">
    <property type="nucleotide sequence ID" value="NC_004087.1"/>
</dbReference>
<dbReference type="SMR" id="Q8QL40"/>
<dbReference type="KEGG" id="vg:951375"/>
<dbReference type="OrthoDB" id="26434at10239"/>
<dbReference type="Proteomes" id="UP000002270">
    <property type="component" value="Genome"/>
</dbReference>
<dbReference type="GO" id="GO:0006355">
    <property type="term" value="P:regulation of DNA-templated transcription"/>
    <property type="evidence" value="ECO:0007669"/>
    <property type="project" value="InterPro"/>
</dbReference>
<dbReference type="CDD" id="cd22231">
    <property type="entry name" value="RHH_NikR_HicB-like"/>
    <property type="match status" value="1"/>
</dbReference>
<dbReference type="Gene3D" id="1.10.1220.10">
    <property type="entry name" value="Met repressor-like"/>
    <property type="match status" value="1"/>
</dbReference>
<dbReference type="InterPro" id="IPR013321">
    <property type="entry name" value="Arc_rbn_hlx_hlx"/>
</dbReference>
<dbReference type="InterPro" id="IPR002145">
    <property type="entry name" value="CopG"/>
</dbReference>
<dbReference type="InterPro" id="IPR010985">
    <property type="entry name" value="Ribbon_hlx_hlx"/>
</dbReference>
<dbReference type="Pfam" id="PF01402">
    <property type="entry name" value="RHH_1"/>
    <property type="match status" value="1"/>
</dbReference>
<dbReference type="SUPFAM" id="SSF47598">
    <property type="entry name" value="Ribbon-helix-helix"/>
    <property type="match status" value="1"/>
</dbReference>
<organismHost>
    <name type="scientific">Saccharolobus islandicus</name>
    <name type="common">Sulfolobus islandicus</name>
    <dbReference type="NCBI Taxonomy" id="43080"/>
</organismHost>
<feature type="chain" id="PRO_0000342318" description="Uncharacterized protein 59">
    <location>
        <begin position="1"/>
        <end position="59"/>
    </location>
</feature>
<sequence length="59" mass="6967">MMKIITFKIPEETLLLLDAYAIKHNMNRSEVIRLAIEKLVVDEMKNEPVPRARVEKIKF</sequence>